<organism>
    <name type="scientific">Mus musculus</name>
    <name type="common">Mouse</name>
    <dbReference type="NCBI Taxonomy" id="10090"/>
    <lineage>
        <taxon>Eukaryota</taxon>
        <taxon>Metazoa</taxon>
        <taxon>Chordata</taxon>
        <taxon>Craniata</taxon>
        <taxon>Vertebrata</taxon>
        <taxon>Euteleostomi</taxon>
        <taxon>Mammalia</taxon>
        <taxon>Eutheria</taxon>
        <taxon>Euarchontoglires</taxon>
        <taxon>Glires</taxon>
        <taxon>Rodentia</taxon>
        <taxon>Myomorpha</taxon>
        <taxon>Muroidea</taxon>
        <taxon>Muridae</taxon>
        <taxon>Murinae</taxon>
        <taxon>Mus</taxon>
        <taxon>Mus</taxon>
    </lineage>
</organism>
<protein>
    <recommendedName>
        <fullName evidence="4">Large ribosomal subunit protein eL36</fullName>
    </recommendedName>
    <alternativeName>
        <fullName>60S ribosomal protein L36</fullName>
    </alternativeName>
</protein>
<evidence type="ECO:0000250" key="1">
    <source>
        <dbReference type="UniProtKB" id="Q2YGT9"/>
    </source>
</evidence>
<evidence type="ECO:0000250" key="2">
    <source>
        <dbReference type="UniProtKB" id="Q9Y3U8"/>
    </source>
</evidence>
<evidence type="ECO:0000269" key="3">
    <source>
    </source>
</evidence>
<evidence type="ECO:0000305" key="4"/>
<evidence type="ECO:0007744" key="5">
    <source>
        <dbReference type="PDB" id="7CPU"/>
    </source>
</evidence>
<evidence type="ECO:0007744" key="6">
    <source>
        <dbReference type="PDB" id="7CPV"/>
    </source>
</evidence>
<feature type="chain" id="PRO_0000195008" description="Large ribosomal subunit protein eL36">
    <location>
        <begin position="1"/>
        <end position="105"/>
    </location>
</feature>
<feature type="modified residue" description="N6-acetyllysine" evidence="2">
    <location>
        <position position="62"/>
    </location>
</feature>
<feature type="sequence conflict" description="In Ref. 1; CAA53502." evidence="4" ref="1">
    <original>GRLTK</original>
    <variation>SRLTN</variation>
    <location>
        <begin position="31"/>
        <end position="35"/>
    </location>
</feature>
<feature type="sequence conflict" description="In Ref. 1; CAA53502." evidence="4" ref="1">
    <original>D</original>
    <variation>S</variation>
    <location>
        <position position="66"/>
    </location>
</feature>
<feature type="sequence conflict" description="In Ref. 1; CAA53502." evidence="4" ref="1">
    <original>RK</original>
    <variation>EE</variation>
    <location>
        <begin position="98"/>
        <end position="99"/>
    </location>
</feature>
<keyword id="KW-0002">3D-structure</keyword>
<keyword id="KW-0007">Acetylation</keyword>
<keyword id="KW-0963">Cytoplasm</keyword>
<keyword id="KW-1185">Reference proteome</keyword>
<keyword id="KW-0687">Ribonucleoprotein</keyword>
<keyword id="KW-0689">Ribosomal protein</keyword>
<dbReference type="EMBL" id="X75895">
    <property type="protein sequence ID" value="CAA53502.1"/>
    <property type="molecule type" value="mRNA"/>
</dbReference>
<dbReference type="EMBL" id="AK003115">
    <property type="protein sequence ID" value="BAB22575.1"/>
    <property type="molecule type" value="mRNA"/>
</dbReference>
<dbReference type="EMBL" id="BC021595">
    <property type="protein sequence ID" value="AAH21595.1"/>
    <property type="molecule type" value="mRNA"/>
</dbReference>
<dbReference type="CCDS" id="CCDS37665.1"/>
<dbReference type="PIR" id="S41338">
    <property type="entry name" value="S41338"/>
</dbReference>
<dbReference type="RefSeq" id="NP_061200.2">
    <property type="nucleotide sequence ID" value="NM_018730.3"/>
</dbReference>
<dbReference type="RefSeq" id="XP_030105767.1">
    <property type="nucleotide sequence ID" value="XM_030249907.1"/>
</dbReference>
<dbReference type="PDB" id="6SWA">
    <property type="method" value="EM"/>
    <property type="resolution" value="3.10 A"/>
    <property type="chains" value="g=1-105"/>
</dbReference>
<dbReference type="PDB" id="7CPU">
    <property type="method" value="EM"/>
    <property type="resolution" value="2.82 A"/>
    <property type="chains" value="Li=1-105"/>
</dbReference>
<dbReference type="PDB" id="7CPV">
    <property type="method" value="EM"/>
    <property type="resolution" value="3.03 A"/>
    <property type="chains" value="Li=1-105"/>
</dbReference>
<dbReference type="PDB" id="7LS1">
    <property type="method" value="EM"/>
    <property type="resolution" value="3.30 A"/>
    <property type="chains" value="c2=1-105"/>
</dbReference>
<dbReference type="PDB" id="7LS2">
    <property type="method" value="EM"/>
    <property type="resolution" value="3.10 A"/>
    <property type="chains" value="c2=1-105"/>
</dbReference>
<dbReference type="PDBsum" id="6SWA"/>
<dbReference type="PDBsum" id="7CPU"/>
<dbReference type="PDBsum" id="7CPV"/>
<dbReference type="PDBsum" id="7LS1"/>
<dbReference type="PDBsum" id="7LS2"/>
<dbReference type="EMDB" id="EMD-10321"/>
<dbReference type="EMDB" id="EMD-23500"/>
<dbReference type="EMDB" id="EMD-23501"/>
<dbReference type="EMDB" id="EMD-30432"/>
<dbReference type="EMDB" id="EMD-30433"/>
<dbReference type="SMR" id="P47964"/>
<dbReference type="ComplexPortal" id="CPX-5262">
    <property type="entry name" value="60S cytosolic large ribosomal subunit"/>
</dbReference>
<dbReference type="ComplexPortal" id="CPX-7662">
    <property type="entry name" value="60S cytosolic large ribosomal subunit, testis-specific variant"/>
</dbReference>
<dbReference type="ComplexPortal" id="CPX-7663">
    <property type="entry name" value="60S cytosolic large ribosomal subunit, striated muscle variant"/>
</dbReference>
<dbReference type="FunCoup" id="P47964">
    <property type="interactions" value="1807"/>
</dbReference>
<dbReference type="IntAct" id="P47964">
    <property type="interactions" value="3"/>
</dbReference>
<dbReference type="MINT" id="P47964"/>
<dbReference type="STRING" id="10090.ENSMUSP00000079340"/>
<dbReference type="GlyGen" id="P47964">
    <property type="glycosylation" value="1 site, 1 O-linked glycan (1 site)"/>
</dbReference>
<dbReference type="iPTMnet" id="P47964"/>
<dbReference type="PhosphoSitePlus" id="P47964"/>
<dbReference type="SwissPalm" id="P47964"/>
<dbReference type="jPOST" id="P47964"/>
<dbReference type="PaxDb" id="10090-ENSMUSP00000079340"/>
<dbReference type="PeptideAtlas" id="P47964"/>
<dbReference type="ProteomicsDB" id="253302"/>
<dbReference type="ProteomicsDB" id="338697"/>
<dbReference type="Pumba" id="P47964"/>
<dbReference type="Antibodypedia" id="23940">
    <property type="antibodies" value="175 antibodies from 28 providers"/>
</dbReference>
<dbReference type="DNASU" id="54217"/>
<dbReference type="Ensembl" id="ENSMUST00000080492.7">
    <property type="protein sequence ID" value="ENSMUSP00000079340.6"/>
    <property type="gene ID" value="ENSMUSG00000057863.7"/>
</dbReference>
<dbReference type="GeneID" id="54217"/>
<dbReference type="KEGG" id="mmu:54217"/>
<dbReference type="AGR" id="MGI:1860603"/>
<dbReference type="CTD" id="25873"/>
<dbReference type="MGI" id="MGI:1860603">
    <property type="gene designation" value="Rpl36"/>
</dbReference>
<dbReference type="VEuPathDB" id="HostDB:ENSMUSG00000057863"/>
<dbReference type="eggNOG" id="KOG3452">
    <property type="taxonomic scope" value="Eukaryota"/>
</dbReference>
<dbReference type="GeneTree" id="ENSGT00390000011943"/>
<dbReference type="HOGENOM" id="CLU_140672_2_0_1"/>
<dbReference type="InParanoid" id="P47964"/>
<dbReference type="OMA" id="NKGHKTE"/>
<dbReference type="OrthoDB" id="9616667at2759"/>
<dbReference type="PhylomeDB" id="P47964"/>
<dbReference type="TreeFam" id="TF314463"/>
<dbReference type="Reactome" id="R-MMU-156827">
    <property type="pathway name" value="L13a-mediated translational silencing of Ceruloplasmin expression"/>
</dbReference>
<dbReference type="Reactome" id="R-MMU-1799339">
    <property type="pathway name" value="SRP-dependent cotranslational protein targeting to membrane"/>
</dbReference>
<dbReference type="Reactome" id="R-MMU-6791226">
    <property type="pathway name" value="Major pathway of rRNA processing in the nucleolus and cytosol"/>
</dbReference>
<dbReference type="Reactome" id="R-MMU-72689">
    <property type="pathway name" value="Formation of a pool of free 40S subunits"/>
</dbReference>
<dbReference type="Reactome" id="R-MMU-72706">
    <property type="pathway name" value="GTP hydrolysis and joining of the 60S ribosomal subunit"/>
</dbReference>
<dbReference type="Reactome" id="R-MMU-975956">
    <property type="pathway name" value="Nonsense Mediated Decay (NMD) independent of the Exon Junction Complex (EJC)"/>
</dbReference>
<dbReference type="Reactome" id="R-MMU-975957">
    <property type="pathway name" value="Nonsense Mediated Decay (NMD) enhanced by the Exon Junction Complex (EJC)"/>
</dbReference>
<dbReference type="BioGRID-ORCS" id="54217">
    <property type="hits" value="13 hits in 38 CRISPR screens"/>
</dbReference>
<dbReference type="CD-CODE" id="CE726F99">
    <property type="entry name" value="Postsynaptic density"/>
</dbReference>
<dbReference type="ChiTaRS" id="Rpl36">
    <property type="organism name" value="mouse"/>
</dbReference>
<dbReference type="PRO" id="PR:P47964"/>
<dbReference type="Proteomes" id="UP000000589">
    <property type="component" value="Chromosome 17"/>
</dbReference>
<dbReference type="RNAct" id="P47964">
    <property type="molecule type" value="protein"/>
</dbReference>
<dbReference type="Bgee" id="ENSMUSG00000057863">
    <property type="expression patterns" value="Expressed in embryonic facial prominence and 67 other cell types or tissues"/>
</dbReference>
<dbReference type="GO" id="GO:0005737">
    <property type="term" value="C:cytoplasm"/>
    <property type="evidence" value="ECO:0000314"/>
    <property type="project" value="ComplexPortal"/>
</dbReference>
<dbReference type="GO" id="GO:0005829">
    <property type="term" value="C:cytosol"/>
    <property type="evidence" value="ECO:0000304"/>
    <property type="project" value="Reactome"/>
</dbReference>
<dbReference type="GO" id="GO:0022625">
    <property type="term" value="C:cytosolic large ribosomal subunit"/>
    <property type="evidence" value="ECO:0000314"/>
    <property type="project" value="UniProtKB"/>
</dbReference>
<dbReference type="GO" id="GO:0005730">
    <property type="term" value="C:nucleolus"/>
    <property type="evidence" value="ECO:0007669"/>
    <property type="project" value="Ensembl"/>
</dbReference>
<dbReference type="GO" id="GO:0098794">
    <property type="term" value="C:postsynapse"/>
    <property type="evidence" value="ECO:0000303"/>
    <property type="project" value="SynGO"/>
</dbReference>
<dbReference type="GO" id="GO:0098793">
    <property type="term" value="C:presynapse"/>
    <property type="evidence" value="ECO:0000303"/>
    <property type="project" value="SynGO"/>
</dbReference>
<dbReference type="GO" id="GO:0005840">
    <property type="term" value="C:ribosome"/>
    <property type="evidence" value="ECO:0000303"/>
    <property type="project" value="SynGO"/>
</dbReference>
<dbReference type="GO" id="GO:0045202">
    <property type="term" value="C:synapse"/>
    <property type="evidence" value="ECO:0000314"/>
    <property type="project" value="SynGO"/>
</dbReference>
<dbReference type="GO" id="GO:0003735">
    <property type="term" value="F:structural constituent of ribosome"/>
    <property type="evidence" value="ECO:0000314"/>
    <property type="project" value="UniProtKB"/>
</dbReference>
<dbReference type="GO" id="GO:0002181">
    <property type="term" value="P:cytoplasmic translation"/>
    <property type="evidence" value="ECO:0000303"/>
    <property type="project" value="ComplexPortal"/>
</dbReference>
<dbReference type="GO" id="GO:0140242">
    <property type="term" value="P:translation at postsynapse"/>
    <property type="evidence" value="ECO:0000303"/>
    <property type="project" value="SynGO"/>
</dbReference>
<dbReference type="GO" id="GO:0140236">
    <property type="term" value="P:translation at presynapse"/>
    <property type="evidence" value="ECO:0000303"/>
    <property type="project" value="SynGO"/>
</dbReference>
<dbReference type="FunFam" id="1.10.10.1760:FF:000002">
    <property type="entry name" value="60S ribosomal protein L36"/>
    <property type="match status" value="1"/>
</dbReference>
<dbReference type="Gene3D" id="1.10.10.1760">
    <property type="entry name" value="60S ribosomal protein L36"/>
    <property type="match status" value="1"/>
</dbReference>
<dbReference type="InterPro" id="IPR000509">
    <property type="entry name" value="Ribosomal_eL36"/>
</dbReference>
<dbReference type="InterPro" id="IPR038097">
    <property type="entry name" value="Ribosomal_eL36_sf"/>
</dbReference>
<dbReference type="PANTHER" id="PTHR10114">
    <property type="entry name" value="60S RIBOSOMAL PROTEIN L36"/>
    <property type="match status" value="1"/>
</dbReference>
<dbReference type="Pfam" id="PF01158">
    <property type="entry name" value="Ribosomal_L36e"/>
    <property type="match status" value="1"/>
</dbReference>
<dbReference type="PROSITE" id="PS01190">
    <property type="entry name" value="RIBOSOMAL_L36E"/>
    <property type="match status" value="1"/>
</dbReference>
<reference key="1">
    <citation type="submission" date="1994-01" db="EMBL/GenBank/DDBJ databases">
        <authorList>
            <person name="Dittmar G.A.G."/>
        </authorList>
    </citation>
    <scope>NUCLEOTIDE SEQUENCE [MRNA]</scope>
    <source>
        <strain>EAT</strain>
    </source>
</reference>
<reference key="2">
    <citation type="journal article" date="2005" name="Science">
        <title>The transcriptional landscape of the mammalian genome.</title>
        <authorList>
            <person name="Carninci P."/>
            <person name="Kasukawa T."/>
            <person name="Katayama S."/>
            <person name="Gough J."/>
            <person name="Frith M.C."/>
            <person name="Maeda N."/>
            <person name="Oyama R."/>
            <person name="Ravasi T."/>
            <person name="Lenhard B."/>
            <person name="Wells C."/>
            <person name="Kodzius R."/>
            <person name="Shimokawa K."/>
            <person name="Bajic V.B."/>
            <person name="Brenner S.E."/>
            <person name="Batalov S."/>
            <person name="Forrest A.R."/>
            <person name="Zavolan M."/>
            <person name="Davis M.J."/>
            <person name="Wilming L.G."/>
            <person name="Aidinis V."/>
            <person name="Allen J.E."/>
            <person name="Ambesi-Impiombato A."/>
            <person name="Apweiler R."/>
            <person name="Aturaliya R.N."/>
            <person name="Bailey T.L."/>
            <person name="Bansal M."/>
            <person name="Baxter L."/>
            <person name="Beisel K.W."/>
            <person name="Bersano T."/>
            <person name="Bono H."/>
            <person name="Chalk A.M."/>
            <person name="Chiu K.P."/>
            <person name="Choudhary V."/>
            <person name="Christoffels A."/>
            <person name="Clutterbuck D.R."/>
            <person name="Crowe M.L."/>
            <person name="Dalla E."/>
            <person name="Dalrymple B.P."/>
            <person name="de Bono B."/>
            <person name="Della Gatta G."/>
            <person name="di Bernardo D."/>
            <person name="Down T."/>
            <person name="Engstrom P."/>
            <person name="Fagiolini M."/>
            <person name="Faulkner G."/>
            <person name="Fletcher C.F."/>
            <person name="Fukushima T."/>
            <person name="Furuno M."/>
            <person name="Futaki S."/>
            <person name="Gariboldi M."/>
            <person name="Georgii-Hemming P."/>
            <person name="Gingeras T.R."/>
            <person name="Gojobori T."/>
            <person name="Green R.E."/>
            <person name="Gustincich S."/>
            <person name="Harbers M."/>
            <person name="Hayashi Y."/>
            <person name="Hensch T.K."/>
            <person name="Hirokawa N."/>
            <person name="Hill D."/>
            <person name="Huminiecki L."/>
            <person name="Iacono M."/>
            <person name="Ikeo K."/>
            <person name="Iwama A."/>
            <person name="Ishikawa T."/>
            <person name="Jakt M."/>
            <person name="Kanapin A."/>
            <person name="Katoh M."/>
            <person name="Kawasawa Y."/>
            <person name="Kelso J."/>
            <person name="Kitamura H."/>
            <person name="Kitano H."/>
            <person name="Kollias G."/>
            <person name="Krishnan S.P."/>
            <person name="Kruger A."/>
            <person name="Kummerfeld S.K."/>
            <person name="Kurochkin I.V."/>
            <person name="Lareau L.F."/>
            <person name="Lazarevic D."/>
            <person name="Lipovich L."/>
            <person name="Liu J."/>
            <person name="Liuni S."/>
            <person name="McWilliam S."/>
            <person name="Madan Babu M."/>
            <person name="Madera M."/>
            <person name="Marchionni L."/>
            <person name="Matsuda H."/>
            <person name="Matsuzawa S."/>
            <person name="Miki H."/>
            <person name="Mignone F."/>
            <person name="Miyake S."/>
            <person name="Morris K."/>
            <person name="Mottagui-Tabar S."/>
            <person name="Mulder N."/>
            <person name="Nakano N."/>
            <person name="Nakauchi H."/>
            <person name="Ng P."/>
            <person name="Nilsson R."/>
            <person name="Nishiguchi S."/>
            <person name="Nishikawa S."/>
            <person name="Nori F."/>
            <person name="Ohara O."/>
            <person name="Okazaki Y."/>
            <person name="Orlando V."/>
            <person name="Pang K.C."/>
            <person name="Pavan W.J."/>
            <person name="Pavesi G."/>
            <person name="Pesole G."/>
            <person name="Petrovsky N."/>
            <person name="Piazza S."/>
            <person name="Reed J."/>
            <person name="Reid J.F."/>
            <person name="Ring B.Z."/>
            <person name="Ringwald M."/>
            <person name="Rost B."/>
            <person name="Ruan Y."/>
            <person name="Salzberg S.L."/>
            <person name="Sandelin A."/>
            <person name="Schneider C."/>
            <person name="Schoenbach C."/>
            <person name="Sekiguchi K."/>
            <person name="Semple C.A."/>
            <person name="Seno S."/>
            <person name="Sessa L."/>
            <person name="Sheng Y."/>
            <person name="Shibata Y."/>
            <person name="Shimada H."/>
            <person name="Shimada K."/>
            <person name="Silva D."/>
            <person name="Sinclair B."/>
            <person name="Sperling S."/>
            <person name="Stupka E."/>
            <person name="Sugiura K."/>
            <person name="Sultana R."/>
            <person name="Takenaka Y."/>
            <person name="Taki K."/>
            <person name="Tammoja K."/>
            <person name="Tan S.L."/>
            <person name="Tang S."/>
            <person name="Taylor M.S."/>
            <person name="Tegner J."/>
            <person name="Teichmann S.A."/>
            <person name="Ueda H.R."/>
            <person name="van Nimwegen E."/>
            <person name="Verardo R."/>
            <person name="Wei C.L."/>
            <person name="Yagi K."/>
            <person name="Yamanishi H."/>
            <person name="Zabarovsky E."/>
            <person name="Zhu S."/>
            <person name="Zimmer A."/>
            <person name="Hide W."/>
            <person name="Bult C."/>
            <person name="Grimmond S.M."/>
            <person name="Teasdale R.D."/>
            <person name="Liu E.T."/>
            <person name="Brusic V."/>
            <person name="Quackenbush J."/>
            <person name="Wahlestedt C."/>
            <person name="Mattick J.S."/>
            <person name="Hume D.A."/>
            <person name="Kai C."/>
            <person name="Sasaki D."/>
            <person name="Tomaru Y."/>
            <person name="Fukuda S."/>
            <person name="Kanamori-Katayama M."/>
            <person name="Suzuki M."/>
            <person name="Aoki J."/>
            <person name="Arakawa T."/>
            <person name="Iida J."/>
            <person name="Imamura K."/>
            <person name="Itoh M."/>
            <person name="Kato T."/>
            <person name="Kawaji H."/>
            <person name="Kawagashira N."/>
            <person name="Kawashima T."/>
            <person name="Kojima M."/>
            <person name="Kondo S."/>
            <person name="Konno H."/>
            <person name="Nakano K."/>
            <person name="Ninomiya N."/>
            <person name="Nishio T."/>
            <person name="Okada M."/>
            <person name="Plessy C."/>
            <person name="Shibata K."/>
            <person name="Shiraki T."/>
            <person name="Suzuki S."/>
            <person name="Tagami M."/>
            <person name="Waki K."/>
            <person name="Watahiki A."/>
            <person name="Okamura-Oho Y."/>
            <person name="Suzuki H."/>
            <person name="Kawai J."/>
            <person name="Hayashizaki Y."/>
        </authorList>
    </citation>
    <scope>NUCLEOTIDE SEQUENCE [LARGE SCALE MRNA]</scope>
    <source>
        <strain>C57BL/6J</strain>
        <tissue>Heart</tissue>
    </source>
</reference>
<reference key="3">
    <citation type="journal article" date="2009" name="PLoS Biol.">
        <title>Lineage-specific biology revealed by a finished genome assembly of the mouse.</title>
        <authorList>
            <person name="Church D.M."/>
            <person name="Goodstadt L."/>
            <person name="Hillier L.W."/>
            <person name="Zody M.C."/>
            <person name="Goldstein S."/>
            <person name="She X."/>
            <person name="Bult C.J."/>
            <person name="Agarwala R."/>
            <person name="Cherry J.L."/>
            <person name="DiCuccio M."/>
            <person name="Hlavina W."/>
            <person name="Kapustin Y."/>
            <person name="Meric P."/>
            <person name="Maglott D."/>
            <person name="Birtle Z."/>
            <person name="Marques A.C."/>
            <person name="Graves T."/>
            <person name="Zhou S."/>
            <person name="Teague B."/>
            <person name="Potamousis K."/>
            <person name="Churas C."/>
            <person name="Place M."/>
            <person name="Herschleb J."/>
            <person name="Runnheim R."/>
            <person name="Forrest D."/>
            <person name="Amos-Landgraf J."/>
            <person name="Schwartz D.C."/>
            <person name="Cheng Z."/>
            <person name="Lindblad-Toh K."/>
            <person name="Eichler E.E."/>
            <person name="Ponting C.P."/>
        </authorList>
    </citation>
    <scope>NUCLEOTIDE SEQUENCE [LARGE SCALE GENOMIC DNA]</scope>
    <source>
        <strain>C57BL/6J</strain>
    </source>
</reference>
<reference key="4">
    <citation type="journal article" date="2004" name="Genome Res.">
        <title>The status, quality, and expansion of the NIH full-length cDNA project: the Mammalian Gene Collection (MGC).</title>
        <authorList>
            <consortium name="The MGC Project Team"/>
        </authorList>
    </citation>
    <scope>NUCLEOTIDE SEQUENCE [LARGE SCALE MRNA]</scope>
    <source>
        <strain>FVB/N</strain>
        <tissue>Liver</tissue>
    </source>
</reference>
<reference key="5">
    <citation type="journal article" date="2010" name="Cell">
        <title>A tissue-specific atlas of mouse protein phosphorylation and expression.</title>
        <authorList>
            <person name="Huttlin E.L."/>
            <person name="Jedrychowski M.P."/>
            <person name="Elias J.E."/>
            <person name="Goswami T."/>
            <person name="Rad R."/>
            <person name="Beausoleil S.A."/>
            <person name="Villen J."/>
            <person name="Haas W."/>
            <person name="Sowa M.E."/>
            <person name="Gygi S.P."/>
        </authorList>
    </citation>
    <scope>IDENTIFICATION BY MASS SPECTROMETRY [LARGE SCALE ANALYSIS]</scope>
    <source>
        <tissue>Lung</tissue>
        <tissue>Pancreas</tissue>
    </source>
</reference>
<reference evidence="5 6" key="6">
    <citation type="journal article" date="2022" name="Nature">
        <title>A male germ-cell-specific ribosome controls male fertility.</title>
        <authorList>
            <person name="Li H."/>
            <person name="Huo Y."/>
            <person name="He X."/>
            <person name="Yao L."/>
            <person name="Zhang H."/>
            <person name="Cui Y."/>
            <person name="Xiao H."/>
            <person name="Xie W."/>
            <person name="Zhang D."/>
            <person name="Wang Y."/>
            <person name="Zhang S."/>
            <person name="Tu H."/>
            <person name="Cheng Y."/>
            <person name="Guo Y."/>
            <person name="Cao X."/>
            <person name="Zhu Y."/>
            <person name="Jiang T."/>
            <person name="Guo X."/>
            <person name="Qin Y."/>
            <person name="Sha J."/>
        </authorList>
    </citation>
    <scope>STRUCTURE BY ELECTRON MICROSCOPY (3.03 ANGSTROMS) OF RIBOSOME</scope>
    <scope>FUNCTION</scope>
    <scope>SUBUNIT</scope>
    <scope>SUBCELLULAR LOCATION</scope>
</reference>
<sequence>MALRYPMAVGLNKGHKVTKNVSKPRHSRRRGRLTKHTKFVRDMIREVCGFAPYERRAMELLKVSKDKRALKFIKKRVGTHIRAKRKREELSNVLAAMRKAAAKKD</sequence>
<gene>
    <name type="primary">Rpl36</name>
</gene>
<proteinExistence type="evidence at protein level"/>
<name>RL36_MOUSE</name>
<comment type="function">
    <text evidence="3">Component of the large ribosomal subunit (PubMed:36517592). The ribosome is a large ribonucleoprotein complex responsible for the synthesis of proteins in the cell (PubMed:36517592).</text>
</comment>
<comment type="subunit">
    <text evidence="3">Component of the large ribosomal subunit.</text>
</comment>
<comment type="subcellular location">
    <subcellularLocation>
        <location evidence="2">Cytoplasm</location>
        <location evidence="2">Cytosol</location>
    </subcellularLocation>
    <subcellularLocation>
        <location evidence="3">Cytoplasm</location>
    </subcellularLocation>
    <text evidence="1 2">Detected on cytosolic polysomes.</text>
</comment>
<comment type="similarity">
    <text evidence="4">Belongs to the eukaryotic ribosomal protein eL36 family.</text>
</comment>
<accession>P47964</accession>
<accession>Q6ZWZ4</accession>